<evidence type="ECO:0000255" key="1">
    <source>
        <dbReference type="HAMAP-Rule" id="MF_00455"/>
    </source>
</evidence>
<keyword id="KW-0119">Carbohydrate metabolism</keyword>
<keyword id="KW-0963">Cytoplasm</keyword>
<keyword id="KW-0413">Isomerase</keyword>
<keyword id="KW-0460">Magnesium</keyword>
<keyword id="KW-0479">Metal-binding</keyword>
<keyword id="KW-0859">Xylose metabolism</keyword>
<dbReference type="EC" id="5.3.1.5" evidence="1"/>
<dbReference type="EMBL" id="CP000969">
    <property type="protein sequence ID" value="ACB09506.1"/>
    <property type="molecule type" value="Genomic_DNA"/>
</dbReference>
<dbReference type="RefSeq" id="WP_012310984.1">
    <property type="nucleotide sequence ID" value="NC_010483.1"/>
</dbReference>
<dbReference type="SMR" id="B1LB08"/>
<dbReference type="KEGG" id="trq:TRQ2_1162"/>
<dbReference type="HOGENOM" id="CLU_037261_1_0_0"/>
<dbReference type="Proteomes" id="UP000001687">
    <property type="component" value="Chromosome"/>
</dbReference>
<dbReference type="GO" id="GO:0005737">
    <property type="term" value="C:cytoplasm"/>
    <property type="evidence" value="ECO:0007669"/>
    <property type="project" value="UniProtKB-SubCell"/>
</dbReference>
<dbReference type="GO" id="GO:0000287">
    <property type="term" value="F:magnesium ion binding"/>
    <property type="evidence" value="ECO:0007669"/>
    <property type="project" value="UniProtKB-UniRule"/>
</dbReference>
<dbReference type="GO" id="GO:0009045">
    <property type="term" value="F:xylose isomerase activity"/>
    <property type="evidence" value="ECO:0007669"/>
    <property type="project" value="UniProtKB-UniRule"/>
</dbReference>
<dbReference type="GO" id="GO:0042732">
    <property type="term" value="P:D-xylose metabolic process"/>
    <property type="evidence" value="ECO:0007669"/>
    <property type="project" value="UniProtKB-UniRule"/>
</dbReference>
<dbReference type="FunFam" id="3.20.20.150:FF:000002">
    <property type="entry name" value="Xylose isomerase"/>
    <property type="match status" value="1"/>
</dbReference>
<dbReference type="Gene3D" id="3.20.20.150">
    <property type="entry name" value="Divalent-metal-dependent TIM barrel enzymes"/>
    <property type="match status" value="1"/>
</dbReference>
<dbReference type="HAMAP" id="MF_00455">
    <property type="entry name" value="Xylose_isom_A"/>
    <property type="match status" value="1"/>
</dbReference>
<dbReference type="InterPro" id="IPR036237">
    <property type="entry name" value="Xyl_isomerase-like_sf"/>
</dbReference>
<dbReference type="InterPro" id="IPR013022">
    <property type="entry name" value="Xyl_isomerase-like_TIM-brl"/>
</dbReference>
<dbReference type="InterPro" id="IPR013452">
    <property type="entry name" value="Xylose_isom_bac"/>
</dbReference>
<dbReference type="InterPro" id="IPR001998">
    <property type="entry name" value="Xylose_isomerase"/>
</dbReference>
<dbReference type="NCBIfam" id="NF003998">
    <property type="entry name" value="PRK05474.1"/>
    <property type="match status" value="1"/>
</dbReference>
<dbReference type="NCBIfam" id="TIGR02630">
    <property type="entry name" value="xylose_isom_A"/>
    <property type="match status" value="1"/>
</dbReference>
<dbReference type="PANTHER" id="PTHR48408">
    <property type="match status" value="1"/>
</dbReference>
<dbReference type="PANTHER" id="PTHR48408:SF1">
    <property type="entry name" value="XYLOSE ISOMERASE"/>
    <property type="match status" value="1"/>
</dbReference>
<dbReference type="Pfam" id="PF01261">
    <property type="entry name" value="AP_endonuc_2"/>
    <property type="match status" value="1"/>
</dbReference>
<dbReference type="PRINTS" id="PR00688">
    <property type="entry name" value="XYLOSISMRASE"/>
</dbReference>
<dbReference type="SUPFAM" id="SSF51658">
    <property type="entry name" value="Xylose isomerase-like"/>
    <property type="match status" value="1"/>
</dbReference>
<dbReference type="PROSITE" id="PS51415">
    <property type="entry name" value="XYLOSE_ISOMERASE"/>
    <property type="match status" value="1"/>
</dbReference>
<protein>
    <recommendedName>
        <fullName evidence="1">Xylose isomerase</fullName>
        <ecNumber evidence="1">5.3.1.5</ecNumber>
    </recommendedName>
</protein>
<name>XYLA_THESQ</name>
<feature type="chain" id="PRO_1000200314" description="Xylose isomerase">
    <location>
        <begin position="1"/>
        <end position="444"/>
    </location>
</feature>
<feature type="active site" evidence="1">
    <location>
        <position position="101"/>
    </location>
</feature>
<feature type="active site" evidence="1">
    <location>
        <position position="104"/>
    </location>
</feature>
<feature type="binding site" evidence="1">
    <location>
        <position position="232"/>
    </location>
    <ligand>
        <name>Mg(2+)</name>
        <dbReference type="ChEBI" id="CHEBI:18420"/>
        <label>1</label>
    </ligand>
</feature>
<feature type="binding site" evidence="1">
    <location>
        <position position="268"/>
    </location>
    <ligand>
        <name>Mg(2+)</name>
        <dbReference type="ChEBI" id="CHEBI:18420"/>
        <label>1</label>
    </ligand>
</feature>
<feature type="binding site" evidence="1">
    <location>
        <position position="268"/>
    </location>
    <ligand>
        <name>Mg(2+)</name>
        <dbReference type="ChEBI" id="CHEBI:18420"/>
        <label>2</label>
    </ligand>
</feature>
<feature type="binding site" evidence="1">
    <location>
        <position position="271"/>
    </location>
    <ligand>
        <name>Mg(2+)</name>
        <dbReference type="ChEBI" id="CHEBI:18420"/>
        <label>2</label>
    </ligand>
</feature>
<feature type="binding site" evidence="1">
    <location>
        <position position="296"/>
    </location>
    <ligand>
        <name>Mg(2+)</name>
        <dbReference type="ChEBI" id="CHEBI:18420"/>
        <label>1</label>
    </ligand>
</feature>
<feature type="binding site" evidence="1">
    <location>
        <position position="307"/>
    </location>
    <ligand>
        <name>Mg(2+)</name>
        <dbReference type="ChEBI" id="CHEBI:18420"/>
        <label>2</label>
    </ligand>
</feature>
<feature type="binding site" evidence="1">
    <location>
        <position position="309"/>
    </location>
    <ligand>
        <name>Mg(2+)</name>
        <dbReference type="ChEBI" id="CHEBI:18420"/>
        <label>2</label>
    </ligand>
</feature>
<feature type="binding site" evidence="1">
    <location>
        <position position="339"/>
    </location>
    <ligand>
        <name>Mg(2+)</name>
        <dbReference type="ChEBI" id="CHEBI:18420"/>
        <label>1</label>
    </ligand>
</feature>
<comment type="catalytic activity">
    <reaction evidence="1">
        <text>alpha-D-xylose = alpha-D-xylulofuranose</text>
        <dbReference type="Rhea" id="RHEA:22816"/>
        <dbReference type="ChEBI" id="CHEBI:28518"/>
        <dbReference type="ChEBI" id="CHEBI:188998"/>
        <dbReference type="EC" id="5.3.1.5"/>
    </reaction>
</comment>
<comment type="cofactor">
    <cofactor evidence="1">
        <name>Mg(2+)</name>
        <dbReference type="ChEBI" id="CHEBI:18420"/>
    </cofactor>
    <text evidence="1">Binds 2 magnesium ions per subunit.</text>
</comment>
<comment type="subunit">
    <text evidence="1">Homotetramer.</text>
</comment>
<comment type="subcellular location">
    <subcellularLocation>
        <location evidence="1">Cytoplasm</location>
    </subcellularLocation>
</comment>
<comment type="similarity">
    <text evidence="1">Belongs to the xylose isomerase family.</text>
</comment>
<accession>B1LB08</accession>
<gene>
    <name evidence="1" type="primary">xylA</name>
    <name type="ordered locus">TRQ2_1162</name>
</gene>
<organism>
    <name type="scientific">Thermotoga sp. (strain RQ2)</name>
    <dbReference type="NCBI Taxonomy" id="126740"/>
    <lineage>
        <taxon>Bacteria</taxon>
        <taxon>Thermotogati</taxon>
        <taxon>Thermotogota</taxon>
        <taxon>Thermotogae</taxon>
        <taxon>Thermotogales</taxon>
        <taxon>Thermotogaceae</taxon>
        <taxon>Thermotoga</taxon>
    </lineage>
</organism>
<sequence>MMEFFPEIPKIQFEGKESTNPLAFKFYDPNEVIDGKPLKDHLKFSVAFWHTFVNEGRDPFGDPTAERPWNRFSDPMDKAFARVDALFEFCEKLNIEYFCFHDRDIAPEGKTLRETNKILDKVVERIKERMKDSNVKLLWGTANLFSHPRYMHGAATTCSADVFAYAAAQVKKALEITKELGGEGYVFWGGREGYETLLNTDLGLELENLARFLRMAVEYAKKIGFTGQFLIEPKPKEPTKHQYDFDVATAYAFLKNHGLDEYFKFNIEANHATLAGHTFQHELRMARILGKLGSIDANQGDLLLGWDTDQFPTNIYDTTLAMYEVIKAGGFTKGGLNFDAKVRRASYKVEDLFIGHIAGMDTFALGFKIAYKLAKDGVFDKFIEEKYRSFKEGIGKEIVEGKTDFEKLEEYIIDKEDIELPSGKQEYLESLLNSYIVKTIAELR</sequence>
<reference key="1">
    <citation type="journal article" date="2011" name="J. Bacteriol.">
        <title>Genome sequence of Thermotoga sp. strain RQ2, a hyperthermophilic bacterium isolated from a geothermally heated region of the seafloor near Ribeira Quente, the Azores.</title>
        <authorList>
            <person name="Swithers K.S."/>
            <person name="DiPippo J.L."/>
            <person name="Bruce D.C."/>
            <person name="Detter C."/>
            <person name="Tapia R."/>
            <person name="Han S."/>
            <person name="Saunders E."/>
            <person name="Goodwin L.A."/>
            <person name="Han J."/>
            <person name="Woyke T."/>
            <person name="Pitluck S."/>
            <person name="Pennacchio L."/>
            <person name="Nolan M."/>
            <person name="Mikhailova N."/>
            <person name="Lykidis A."/>
            <person name="Land M.L."/>
            <person name="Brettin T."/>
            <person name="Stetter K.O."/>
            <person name="Nelson K.E."/>
            <person name="Gogarten J.P."/>
            <person name="Noll K.M."/>
        </authorList>
    </citation>
    <scope>NUCLEOTIDE SEQUENCE [LARGE SCALE GENOMIC DNA]</scope>
    <source>
        <strain>RQ2</strain>
    </source>
</reference>
<proteinExistence type="inferred from homology"/>